<sequence length="729" mass="82586">MAAAWSWRASHSTITMTSGSLVVLFLLLSIWQPAVQVEGRRQMANSQEMIKDHLGARSQNKTPAITNNANQSSTSSADLDDGAADDDDNKADLPVNVSSKPYWRNPKKMSFLQTRPSGSLLTLNCHALGNPEPNITWYRNGTVDWTRGYGSLKRNRWTLTMEDLVPGDCGNYTCKVCNSLGCIRHDTQVIVSDRVNHKPILMTGPLNLTLVVNSTGSMHCKYLSDLTSKKAWIFVPCHGMTNCSNNRSIIAEDKDQLDFVNVRMEQEGWYTCVESNSLGQSNSTAYLRVVRSLHVLEAGVASGSLHSTSFVYIFVFGGLIFIFMTTLFVFYAIRKMKHEKVLKQRIETVHQWTKKVIIFKPEGGGDSSGSMDTMIMPVVRIQKQRTTVLQNGNEPAPFNEYEFPLDSNWELPRSHLVLGATLGEGAFGRVVMAEVNNAIVAVKMVKEGHTDDDIASLVREMEVMKIIGRHINIINLLGCCSQNGPLYVIVEYAPHGNLKDFLYKNRPFGRDQDRDSSQPPPSPPAHVITEKDLIKFAHQIARGMDYLASRRCIHRDLAARNVLVSDDYVLKIADFGLARDIQSTDYYRKNTNGRLPIKWMAPESLQEKFYDSKSDVWSYGILLWEIMTYGQQPYPTIMSAEELYTYLMSGQRMEKPAKCSMNIYILMRQCWHFNADDRPPFTEIVEYMDKLLQTKEDYLDVDIANLDTPPSTSDEEEDETDNLQKWCNY</sequence>
<reference key="1">
    <citation type="journal article" date="1993" name="Development">
        <title>Two FGF-receptor homologues of Drosophila: one is expressed in mesodermal primordium in early embryos.</title>
        <authorList>
            <person name="Shishido E."/>
            <person name="Higashijima S."/>
            <person name="Emori Y."/>
            <person name="Saigo K."/>
        </authorList>
    </citation>
    <scope>NUCLEOTIDE SEQUENCE [MRNA]</scope>
    <scope>FUNCTION</scope>
    <scope>TISSUE SPECIFICITY</scope>
    <scope>DEVELOPMENTAL STAGE</scope>
    <source>
        <strain>Canton-S</strain>
        <tissue>Pupae</tissue>
    </source>
</reference>
<reference key="2">
    <citation type="journal article" date="1994" name="Gene">
        <title>Alternative splicing generates two distinct transcripts for the Drosophila melanogaster fibroblast growth factor receptor homolog.</title>
        <authorList>
            <person name="Ito M."/>
            <person name="Matsui T."/>
            <person name="Taniguchi T."/>
            <person name="Chihara K."/>
        </authorList>
    </citation>
    <scope>NUCLEOTIDE SEQUENCE [MRNA]</scope>
    <source>
        <strain>Oregon-R</strain>
        <tissue>Embryo</tissue>
    </source>
</reference>
<reference key="3">
    <citation type="journal article" date="2000" name="Science">
        <title>The genome sequence of Drosophila melanogaster.</title>
        <authorList>
            <person name="Adams M.D."/>
            <person name="Celniker S.E."/>
            <person name="Holt R.A."/>
            <person name="Evans C.A."/>
            <person name="Gocayne J.D."/>
            <person name="Amanatides P.G."/>
            <person name="Scherer S.E."/>
            <person name="Li P.W."/>
            <person name="Hoskins R.A."/>
            <person name="Galle R.F."/>
            <person name="George R.A."/>
            <person name="Lewis S.E."/>
            <person name="Richards S."/>
            <person name="Ashburner M."/>
            <person name="Henderson S.N."/>
            <person name="Sutton G.G."/>
            <person name="Wortman J.R."/>
            <person name="Yandell M.D."/>
            <person name="Zhang Q."/>
            <person name="Chen L.X."/>
            <person name="Brandon R.C."/>
            <person name="Rogers Y.-H.C."/>
            <person name="Blazej R.G."/>
            <person name="Champe M."/>
            <person name="Pfeiffer B.D."/>
            <person name="Wan K.H."/>
            <person name="Doyle C."/>
            <person name="Baxter E.G."/>
            <person name="Helt G."/>
            <person name="Nelson C.R."/>
            <person name="Miklos G.L.G."/>
            <person name="Abril J.F."/>
            <person name="Agbayani A."/>
            <person name="An H.-J."/>
            <person name="Andrews-Pfannkoch C."/>
            <person name="Baldwin D."/>
            <person name="Ballew R.M."/>
            <person name="Basu A."/>
            <person name="Baxendale J."/>
            <person name="Bayraktaroglu L."/>
            <person name="Beasley E.M."/>
            <person name="Beeson K.Y."/>
            <person name="Benos P.V."/>
            <person name="Berman B.P."/>
            <person name="Bhandari D."/>
            <person name="Bolshakov S."/>
            <person name="Borkova D."/>
            <person name="Botchan M.R."/>
            <person name="Bouck J."/>
            <person name="Brokstein P."/>
            <person name="Brottier P."/>
            <person name="Burtis K.C."/>
            <person name="Busam D.A."/>
            <person name="Butler H."/>
            <person name="Cadieu E."/>
            <person name="Center A."/>
            <person name="Chandra I."/>
            <person name="Cherry J.M."/>
            <person name="Cawley S."/>
            <person name="Dahlke C."/>
            <person name="Davenport L.B."/>
            <person name="Davies P."/>
            <person name="de Pablos B."/>
            <person name="Delcher A."/>
            <person name="Deng Z."/>
            <person name="Mays A.D."/>
            <person name="Dew I."/>
            <person name="Dietz S.M."/>
            <person name="Dodson K."/>
            <person name="Doup L.E."/>
            <person name="Downes M."/>
            <person name="Dugan-Rocha S."/>
            <person name="Dunkov B.C."/>
            <person name="Dunn P."/>
            <person name="Durbin K.J."/>
            <person name="Evangelista C.C."/>
            <person name="Ferraz C."/>
            <person name="Ferriera S."/>
            <person name="Fleischmann W."/>
            <person name="Fosler C."/>
            <person name="Gabrielian A.E."/>
            <person name="Garg N.S."/>
            <person name="Gelbart W.M."/>
            <person name="Glasser K."/>
            <person name="Glodek A."/>
            <person name="Gong F."/>
            <person name="Gorrell J.H."/>
            <person name="Gu Z."/>
            <person name="Guan P."/>
            <person name="Harris M."/>
            <person name="Harris N.L."/>
            <person name="Harvey D.A."/>
            <person name="Heiman T.J."/>
            <person name="Hernandez J.R."/>
            <person name="Houck J."/>
            <person name="Hostin D."/>
            <person name="Houston K.A."/>
            <person name="Howland T.J."/>
            <person name="Wei M.-H."/>
            <person name="Ibegwam C."/>
            <person name="Jalali M."/>
            <person name="Kalush F."/>
            <person name="Karpen G.H."/>
            <person name="Ke Z."/>
            <person name="Kennison J.A."/>
            <person name="Ketchum K.A."/>
            <person name="Kimmel B.E."/>
            <person name="Kodira C.D."/>
            <person name="Kraft C.L."/>
            <person name="Kravitz S."/>
            <person name="Kulp D."/>
            <person name="Lai Z."/>
            <person name="Lasko P."/>
            <person name="Lei Y."/>
            <person name="Levitsky A.A."/>
            <person name="Li J.H."/>
            <person name="Li Z."/>
            <person name="Liang Y."/>
            <person name="Lin X."/>
            <person name="Liu X."/>
            <person name="Mattei B."/>
            <person name="McIntosh T.C."/>
            <person name="McLeod M.P."/>
            <person name="McPherson D."/>
            <person name="Merkulov G."/>
            <person name="Milshina N.V."/>
            <person name="Mobarry C."/>
            <person name="Morris J."/>
            <person name="Moshrefi A."/>
            <person name="Mount S.M."/>
            <person name="Moy M."/>
            <person name="Murphy B."/>
            <person name="Murphy L."/>
            <person name="Muzny D.M."/>
            <person name="Nelson D.L."/>
            <person name="Nelson D.R."/>
            <person name="Nelson K.A."/>
            <person name="Nixon K."/>
            <person name="Nusskern D.R."/>
            <person name="Pacleb J.M."/>
            <person name="Palazzolo M."/>
            <person name="Pittman G.S."/>
            <person name="Pan S."/>
            <person name="Pollard J."/>
            <person name="Puri V."/>
            <person name="Reese M.G."/>
            <person name="Reinert K."/>
            <person name="Remington K."/>
            <person name="Saunders R.D.C."/>
            <person name="Scheeler F."/>
            <person name="Shen H."/>
            <person name="Shue B.C."/>
            <person name="Siden-Kiamos I."/>
            <person name="Simpson M."/>
            <person name="Skupski M.P."/>
            <person name="Smith T.J."/>
            <person name="Spier E."/>
            <person name="Spradling A.C."/>
            <person name="Stapleton M."/>
            <person name="Strong R."/>
            <person name="Sun E."/>
            <person name="Svirskas R."/>
            <person name="Tector C."/>
            <person name="Turner R."/>
            <person name="Venter E."/>
            <person name="Wang A.H."/>
            <person name="Wang X."/>
            <person name="Wang Z.-Y."/>
            <person name="Wassarman D.A."/>
            <person name="Weinstock G.M."/>
            <person name="Weissenbach J."/>
            <person name="Williams S.M."/>
            <person name="Woodage T."/>
            <person name="Worley K.C."/>
            <person name="Wu D."/>
            <person name="Yang S."/>
            <person name="Yao Q.A."/>
            <person name="Ye J."/>
            <person name="Yeh R.-F."/>
            <person name="Zaveri J.S."/>
            <person name="Zhan M."/>
            <person name="Zhang G."/>
            <person name="Zhao Q."/>
            <person name="Zheng L."/>
            <person name="Zheng X.H."/>
            <person name="Zhong F.N."/>
            <person name="Zhong W."/>
            <person name="Zhou X."/>
            <person name="Zhu S.C."/>
            <person name="Zhu X."/>
            <person name="Smith H.O."/>
            <person name="Gibbs R.A."/>
            <person name="Myers E.W."/>
            <person name="Rubin G.M."/>
            <person name="Venter J.C."/>
        </authorList>
    </citation>
    <scope>NUCLEOTIDE SEQUENCE [LARGE SCALE GENOMIC DNA]</scope>
    <source>
        <strain>Berkeley</strain>
    </source>
</reference>
<reference key="4">
    <citation type="journal article" date="2002" name="Genome Biol.">
        <title>Annotation of the Drosophila melanogaster euchromatic genome: a systematic review.</title>
        <authorList>
            <person name="Misra S."/>
            <person name="Crosby M.A."/>
            <person name="Mungall C.J."/>
            <person name="Matthews B.B."/>
            <person name="Campbell K.S."/>
            <person name="Hradecky P."/>
            <person name="Huang Y."/>
            <person name="Kaminker J.S."/>
            <person name="Millburn G.H."/>
            <person name="Prochnik S.E."/>
            <person name="Smith C.D."/>
            <person name="Tupy J.L."/>
            <person name="Whitfield E.J."/>
            <person name="Bayraktaroglu L."/>
            <person name="Berman B.P."/>
            <person name="Bettencourt B.R."/>
            <person name="Celniker S.E."/>
            <person name="de Grey A.D.N.J."/>
            <person name="Drysdale R.A."/>
            <person name="Harris N.L."/>
            <person name="Richter J."/>
            <person name="Russo S."/>
            <person name="Schroeder A.J."/>
            <person name="Shu S.Q."/>
            <person name="Stapleton M."/>
            <person name="Yamada C."/>
            <person name="Ashburner M."/>
            <person name="Gelbart W.M."/>
            <person name="Rubin G.M."/>
            <person name="Lewis S.E."/>
        </authorList>
    </citation>
    <scope>GENOME REANNOTATION</scope>
    <source>
        <strain>Berkeley</strain>
    </source>
</reference>
<reference key="5">
    <citation type="journal article" date="2002" name="Genome Biol.">
        <title>A Drosophila full-length cDNA resource.</title>
        <authorList>
            <person name="Stapleton M."/>
            <person name="Carlson J.W."/>
            <person name="Brokstein P."/>
            <person name="Yu C."/>
            <person name="Champe M."/>
            <person name="George R.A."/>
            <person name="Guarin H."/>
            <person name="Kronmiller B."/>
            <person name="Pacleb J.M."/>
            <person name="Park S."/>
            <person name="Wan K.H."/>
            <person name="Rubin G.M."/>
            <person name="Celniker S.E."/>
        </authorList>
    </citation>
    <scope>NUCLEOTIDE SEQUENCE [LARGE SCALE MRNA]</scope>
    <source>
        <strain>Berkeley</strain>
        <tissue>Embryo</tissue>
    </source>
</reference>
<reference key="6">
    <citation type="journal article" date="1991" name="FEBS Lett.">
        <title>Identification of seven novel protein-tyrosine kinase genes of Drosophila by the polymerase chain reaction.</title>
        <authorList>
            <person name="Shishido E."/>
            <person name="Emori Y."/>
            <person name="Saigo K."/>
        </authorList>
    </citation>
    <scope>NUCLEOTIDE SEQUENCE [GENOMIC DNA] OF 560-615</scope>
</reference>
<reference key="7">
    <citation type="journal article" date="1998" name="Biochem. Biophys. Res. Commun.">
        <title>Sampling the genomic pool of protein tyrosine kinase genes using the polymerase chain reaction with genomic DNA.</title>
        <authorList>
            <person name="Oates A.C."/>
            <person name="Wollberg P."/>
            <person name="Achen M.G."/>
            <person name="Wilks A.F."/>
        </authorList>
    </citation>
    <scope>NUCLEOTIDE SEQUENCE [GENOMIC DNA] OF 562-614</scope>
    <source>
        <tissue>Embryo</tissue>
    </source>
</reference>
<proteinExistence type="evidence at protein level"/>
<organism>
    <name type="scientific">Drosophila melanogaster</name>
    <name type="common">Fruit fly</name>
    <dbReference type="NCBI Taxonomy" id="7227"/>
    <lineage>
        <taxon>Eukaryota</taxon>
        <taxon>Metazoa</taxon>
        <taxon>Ecdysozoa</taxon>
        <taxon>Arthropoda</taxon>
        <taxon>Hexapoda</taxon>
        <taxon>Insecta</taxon>
        <taxon>Pterygota</taxon>
        <taxon>Neoptera</taxon>
        <taxon>Endopterygota</taxon>
        <taxon>Diptera</taxon>
        <taxon>Brachycera</taxon>
        <taxon>Muscomorpha</taxon>
        <taxon>Ephydroidea</taxon>
        <taxon>Drosophilidae</taxon>
        <taxon>Drosophila</taxon>
        <taxon>Sophophora</taxon>
    </lineage>
</organism>
<feature type="signal peptide" evidence="2">
    <location>
        <begin position="1"/>
        <end position="36"/>
    </location>
</feature>
<feature type="chain" id="PRO_0000016794" description="Fibroblast growth factor receptor homolog 1">
    <location>
        <begin position="37"/>
        <end position="729"/>
    </location>
</feature>
<feature type="topological domain" description="Extracellular" evidence="2">
    <location>
        <begin position="37"/>
        <end position="309"/>
    </location>
</feature>
<feature type="transmembrane region" description="Helical" evidence="2">
    <location>
        <begin position="310"/>
        <end position="330"/>
    </location>
</feature>
<feature type="topological domain" description="Cytoplasmic" evidence="2">
    <location>
        <begin position="331"/>
        <end position="729"/>
    </location>
</feature>
<feature type="domain" description="Ig-like C2-type 1">
    <location>
        <begin position="106"/>
        <end position="192"/>
    </location>
</feature>
<feature type="domain" description="Ig-like C2-type 2">
    <location>
        <begin position="203"/>
        <end position="279"/>
    </location>
</feature>
<feature type="domain" description="Protein kinase" evidence="4">
    <location>
        <begin position="416"/>
        <end position="692"/>
    </location>
</feature>
<feature type="region of interest" description="Disordered" evidence="6">
    <location>
        <begin position="56"/>
        <end position="101"/>
    </location>
</feature>
<feature type="compositionally biased region" description="Low complexity" evidence="6">
    <location>
        <begin position="66"/>
        <end position="77"/>
    </location>
</feature>
<feature type="compositionally biased region" description="Acidic residues" evidence="6">
    <location>
        <begin position="78"/>
        <end position="89"/>
    </location>
</feature>
<feature type="active site" description="Proton acceptor" evidence="4 5">
    <location>
        <position position="556"/>
    </location>
</feature>
<feature type="binding site" evidence="4">
    <location>
        <begin position="422"/>
        <end position="430"/>
    </location>
    <ligand>
        <name>ATP</name>
        <dbReference type="ChEBI" id="CHEBI:30616"/>
    </ligand>
</feature>
<feature type="binding site" evidence="4">
    <location>
        <position position="443"/>
    </location>
    <ligand>
        <name>ATP</name>
        <dbReference type="ChEBI" id="CHEBI:30616"/>
    </ligand>
</feature>
<feature type="modified residue" description="Phosphotyrosine; by autocatalysis" evidence="1">
    <location>
        <position position="587"/>
    </location>
</feature>
<feature type="glycosylation site" description="N-linked (GlcNAc...) asparagine" evidence="2">
    <location>
        <position position="70"/>
    </location>
</feature>
<feature type="glycosylation site" description="N-linked (GlcNAc...) asparagine" evidence="2">
    <location>
        <position position="96"/>
    </location>
</feature>
<feature type="glycosylation site" description="N-linked (GlcNAc...) asparagine" evidence="2">
    <location>
        <position position="134"/>
    </location>
</feature>
<feature type="glycosylation site" description="N-linked (GlcNAc...) asparagine" evidence="2">
    <location>
        <position position="140"/>
    </location>
</feature>
<feature type="glycosylation site" description="N-linked (GlcNAc...) asparagine" evidence="2">
    <location>
        <position position="171"/>
    </location>
</feature>
<feature type="glycosylation site" description="N-linked (GlcNAc...) asparagine" evidence="2">
    <location>
        <position position="207"/>
    </location>
</feature>
<feature type="glycosylation site" description="N-linked (GlcNAc...) asparagine" evidence="2">
    <location>
        <position position="213"/>
    </location>
</feature>
<feature type="glycosylation site" description="N-linked (GlcNAc...) asparagine" evidence="2">
    <location>
        <position position="242"/>
    </location>
</feature>
<feature type="glycosylation site" description="N-linked (GlcNAc...) asparagine" evidence="2">
    <location>
        <position position="246"/>
    </location>
</feature>
<feature type="glycosylation site" description="N-linked (GlcNAc...) asparagine" evidence="2">
    <location>
        <position position="282"/>
    </location>
</feature>
<feature type="disulfide bond" evidence="3">
    <location>
        <begin position="125"/>
        <end position="174"/>
    </location>
</feature>
<feature type="disulfide bond" evidence="3">
    <location>
        <begin position="220"/>
        <end position="272"/>
    </location>
</feature>
<feature type="sequence conflict" description="In Ref. 1; CAA52189 and 2; BAA03616/BAA03617." evidence="8" ref="1 2">
    <original>L</original>
    <variation>V</variation>
    <location>
        <position position="21"/>
    </location>
</feature>
<feature type="sequence conflict" description="In Ref. 1; CAA52189 and 2; BAA03616/BAA03617." evidence="8" ref="1 2">
    <original>S</original>
    <variation>T</variation>
    <location>
        <position position="29"/>
    </location>
</feature>
<feature type="sequence conflict" description="In Ref. 1; CAA52189." evidence="8" ref="1">
    <original>A</original>
    <variation>V</variation>
    <location>
        <position position="77"/>
    </location>
</feature>
<feature type="sequence conflict" description="In Ref. 1; CAA52189." evidence="8" ref="1">
    <original>G</original>
    <variation>A</variation>
    <location>
        <position position="167"/>
    </location>
</feature>
<feature type="sequence conflict" description="In Ref. 2; BAA03616/BAA03617." evidence="8" ref="2">
    <original>M</original>
    <variation>S</variation>
    <location>
        <position position="218"/>
    </location>
</feature>
<feature type="sequence conflict" description="In Ref. 2; BAA03616/BAA03617." evidence="8" ref="2">
    <original>C</original>
    <variation>V</variation>
    <location>
        <position position="237"/>
    </location>
</feature>
<feature type="sequence conflict" description="In Ref. 2; BAA03616/BAA03617." evidence="8" ref="2">
    <original>I</original>
    <variation>II</variation>
    <location>
        <position position="358"/>
    </location>
</feature>
<feature type="sequence conflict" description="In Ref. 1; CAA52189." evidence="8" ref="1">
    <original>V</original>
    <variation>M</variation>
    <location>
        <position position="430"/>
    </location>
</feature>
<feature type="sequence conflict" description="In Ref. 1; CAA52189." evidence="8" ref="1">
    <original>K</original>
    <variation>R</variation>
    <location>
        <position position="504"/>
    </location>
</feature>
<feature type="sequence conflict" description="In Ref. 1; CAA52189." evidence="8" ref="1">
    <original>PF</original>
    <variation>RS</variation>
    <location>
        <begin position="507"/>
        <end position="508"/>
    </location>
</feature>
<feature type="sequence conflict" description="In Ref. 1; CAA52189." evidence="8" ref="1">
    <original>V</original>
    <variation>L</variation>
    <location>
        <position position="562"/>
    </location>
</feature>
<feature type="sequence conflict" description="In Ref. 7; CAA05748." evidence="8" ref="7">
    <location>
        <position position="568"/>
    </location>
</feature>
<feature type="sequence conflict" description="In Ref. 2; BAA03616/BAA03617." evidence="8" ref="2">
    <original>L</original>
    <variation>Q</variation>
    <location>
        <position position="570"/>
    </location>
</feature>
<name>FGFR1_DROME</name>
<keyword id="KW-0067">ATP-binding</keyword>
<keyword id="KW-0217">Developmental protein</keyword>
<keyword id="KW-1015">Disulfide bond</keyword>
<keyword id="KW-0325">Glycoprotein</keyword>
<keyword id="KW-0393">Immunoglobulin domain</keyword>
<keyword id="KW-0418">Kinase</keyword>
<keyword id="KW-0472">Membrane</keyword>
<keyword id="KW-0547">Nucleotide-binding</keyword>
<keyword id="KW-0597">Phosphoprotein</keyword>
<keyword id="KW-0675">Receptor</keyword>
<keyword id="KW-1185">Reference proteome</keyword>
<keyword id="KW-0677">Repeat</keyword>
<keyword id="KW-0732">Signal</keyword>
<keyword id="KW-0808">Transferase</keyword>
<keyword id="KW-0812">Transmembrane</keyword>
<keyword id="KW-1133">Transmembrane helix</keyword>
<keyword id="KW-0829">Tyrosine-protein kinase</keyword>
<comment type="function">
    <text evidence="7">May be required for patterning of muscle precursor cells. May be essential for generation of mesodermal and endodermal layers, invaginations of various types of cells and CNS formation.</text>
</comment>
<comment type="catalytic activity">
    <reaction evidence="5">
        <text>L-tyrosyl-[protein] + ATP = O-phospho-L-tyrosyl-[protein] + ADP + H(+)</text>
        <dbReference type="Rhea" id="RHEA:10596"/>
        <dbReference type="Rhea" id="RHEA-COMP:10136"/>
        <dbReference type="Rhea" id="RHEA-COMP:20101"/>
        <dbReference type="ChEBI" id="CHEBI:15378"/>
        <dbReference type="ChEBI" id="CHEBI:30616"/>
        <dbReference type="ChEBI" id="CHEBI:46858"/>
        <dbReference type="ChEBI" id="CHEBI:61978"/>
        <dbReference type="ChEBI" id="CHEBI:456216"/>
        <dbReference type="EC" id="2.7.10.1"/>
    </reaction>
</comment>
<comment type="interaction">
    <interactant intactId="EBI-74984">
        <id>Q07407</id>
    </interactant>
    <interactant intactId="EBI-74922">
        <id>O96757</id>
        <label>stumps</label>
    </interactant>
    <organismsDiffer>false</organismsDiffer>
    <experiments>6</experiments>
</comment>
<comment type="subcellular location">
    <subcellularLocation>
        <location>Membrane</location>
        <topology>Single-pass type I membrane protein</topology>
    </subcellularLocation>
</comment>
<comment type="tissue specificity">
    <text evidence="7">In early embryos, expression is specific to mesodermal primordium and invaginated mesodermal cells. At later stages, expression is seen in putative muscle precursor cells and in the CNS.</text>
</comment>
<comment type="developmental stage">
    <text evidence="7">Embryogenesis.</text>
</comment>
<comment type="similarity">
    <text evidence="4">Belongs to the protein kinase superfamily. Tyr protein kinase family. Fibroblast growth factor receptor subfamily.</text>
</comment>
<comment type="caution">
    <text evidence="8">It is uncertain whether Met-1 or Met-16 is the initiator.</text>
</comment>
<evidence type="ECO:0000250" key="1"/>
<evidence type="ECO:0000255" key="2"/>
<evidence type="ECO:0000255" key="3">
    <source>
        <dbReference type="PROSITE-ProRule" id="PRU00114"/>
    </source>
</evidence>
<evidence type="ECO:0000255" key="4">
    <source>
        <dbReference type="PROSITE-ProRule" id="PRU00159"/>
    </source>
</evidence>
<evidence type="ECO:0000255" key="5">
    <source>
        <dbReference type="PROSITE-ProRule" id="PRU10028"/>
    </source>
</evidence>
<evidence type="ECO:0000256" key="6">
    <source>
        <dbReference type="SAM" id="MobiDB-lite"/>
    </source>
</evidence>
<evidence type="ECO:0000269" key="7">
    <source>
    </source>
</evidence>
<evidence type="ECO:0000305" key="8"/>
<protein>
    <recommendedName>
        <fullName>Fibroblast growth factor receptor homolog 1</fullName>
        <ecNumber>2.7.10.1</ecNumber>
    </recommendedName>
    <alternativeName>
        <fullName>DmHD-38</fullName>
    </alternativeName>
    <alternativeName>
        <fullName>Protein heartless</fullName>
    </alternativeName>
    <alternativeName>
        <fullName>Tyrosine kinase 1</fullName>
        <shortName>dTk1</shortName>
    </alternativeName>
</protein>
<dbReference type="EC" id="2.7.10.1"/>
<dbReference type="EMBL" id="X74030">
    <property type="protein sequence ID" value="CAA52189.1"/>
    <property type="molecule type" value="mRNA"/>
</dbReference>
<dbReference type="EMBL" id="D14976">
    <property type="protein sequence ID" value="BAA03616.1"/>
    <property type="molecule type" value="mRNA"/>
</dbReference>
<dbReference type="EMBL" id="D14977">
    <property type="protein sequence ID" value="BAA03617.1"/>
    <property type="molecule type" value="mRNA"/>
</dbReference>
<dbReference type="EMBL" id="AE014297">
    <property type="protein sequence ID" value="AAF55489.1"/>
    <property type="molecule type" value="Genomic_DNA"/>
</dbReference>
<dbReference type="EMBL" id="AE014297">
    <property type="protein sequence ID" value="AAF55490.1"/>
    <property type="molecule type" value="Genomic_DNA"/>
</dbReference>
<dbReference type="EMBL" id="AE014297">
    <property type="protein sequence ID" value="AAN13755.1"/>
    <property type="molecule type" value="Genomic_DNA"/>
</dbReference>
<dbReference type="EMBL" id="AY051812">
    <property type="protein sequence ID" value="AAK93236.1"/>
    <property type="molecule type" value="mRNA"/>
</dbReference>
<dbReference type="EMBL" id="S55969">
    <property type="protein sequence ID" value="AAB19903.1"/>
    <property type="molecule type" value="Genomic_DNA"/>
</dbReference>
<dbReference type="EMBL" id="AJ002913">
    <property type="protein sequence ID" value="CAA05748.1"/>
    <property type="molecule type" value="Genomic_DNA"/>
</dbReference>
<dbReference type="PIR" id="A49120">
    <property type="entry name" value="A49120"/>
</dbReference>
<dbReference type="RefSeq" id="NP_524394.2">
    <property type="nucleotide sequence ID" value="NM_079670.3"/>
</dbReference>
<dbReference type="RefSeq" id="NP_732286.1">
    <property type="nucleotide sequence ID" value="NM_169784.2"/>
</dbReference>
<dbReference type="RefSeq" id="NP_732287.1">
    <property type="nucleotide sequence ID" value="NM_169785.2"/>
</dbReference>
<dbReference type="SMR" id="Q07407"/>
<dbReference type="BioGRID" id="67184">
    <property type="interactions" value="16"/>
</dbReference>
<dbReference type="FunCoup" id="Q07407">
    <property type="interactions" value="145"/>
</dbReference>
<dbReference type="IntAct" id="Q07407">
    <property type="interactions" value="3"/>
</dbReference>
<dbReference type="STRING" id="7227.FBpp0082970"/>
<dbReference type="GlyCosmos" id="Q07407">
    <property type="glycosylation" value="10 sites, No reported glycans"/>
</dbReference>
<dbReference type="GlyGen" id="Q07407">
    <property type="glycosylation" value="10 sites"/>
</dbReference>
<dbReference type="PaxDb" id="7227-FBpp0082970"/>
<dbReference type="DNASU" id="42160"/>
<dbReference type="EnsemblMetazoa" id="FBtr0083548">
    <property type="protein sequence ID" value="FBpp0082970"/>
    <property type="gene ID" value="FBgn0010389"/>
</dbReference>
<dbReference type="EnsemblMetazoa" id="FBtr0083549">
    <property type="protein sequence ID" value="FBpp0082971"/>
    <property type="gene ID" value="FBgn0010389"/>
</dbReference>
<dbReference type="EnsemblMetazoa" id="FBtr0083550">
    <property type="protein sequence ID" value="FBpp0082972"/>
    <property type="gene ID" value="FBgn0010389"/>
</dbReference>
<dbReference type="GeneID" id="42160"/>
<dbReference type="KEGG" id="dme:Dmel_CG7223"/>
<dbReference type="UCSC" id="CG7223-RB">
    <property type="organism name" value="d. melanogaster"/>
</dbReference>
<dbReference type="AGR" id="FB:FBgn0010389"/>
<dbReference type="CTD" id="3343"/>
<dbReference type="FlyBase" id="FBgn0010389">
    <property type="gene designation" value="htl"/>
</dbReference>
<dbReference type="VEuPathDB" id="VectorBase:FBgn0010389"/>
<dbReference type="eggNOG" id="KOG0200">
    <property type="taxonomic scope" value="Eukaryota"/>
</dbReference>
<dbReference type="GeneTree" id="ENSGT00940000167157"/>
<dbReference type="HOGENOM" id="CLU_000288_74_1_1"/>
<dbReference type="InParanoid" id="Q07407"/>
<dbReference type="OMA" id="CHGMANC"/>
<dbReference type="OrthoDB" id="5984265at2759"/>
<dbReference type="PhylomeDB" id="Q07407"/>
<dbReference type="BRENDA" id="2.7.10.1">
    <property type="organism ID" value="1994"/>
</dbReference>
<dbReference type="Reactome" id="R-DME-109704">
    <property type="pathway name" value="PI3K Cascade"/>
</dbReference>
<dbReference type="Reactome" id="R-DME-1257604">
    <property type="pathway name" value="PIP3 activates AKT signaling"/>
</dbReference>
<dbReference type="Reactome" id="R-DME-1307965">
    <property type="pathway name" value="betaKlotho-mediated ligand binding"/>
</dbReference>
<dbReference type="Reactome" id="R-DME-190322">
    <property type="pathway name" value="FGFR4 ligand binding and activation"/>
</dbReference>
<dbReference type="Reactome" id="R-DME-190371">
    <property type="pathway name" value="FGFR3b ligand binding and activation"/>
</dbReference>
<dbReference type="Reactome" id="R-DME-190372">
    <property type="pathway name" value="FGFR3c ligand binding and activation"/>
</dbReference>
<dbReference type="Reactome" id="R-DME-190375">
    <property type="pathway name" value="FGFR2c ligand binding and activation"/>
</dbReference>
<dbReference type="Reactome" id="R-DME-190377">
    <property type="pathway name" value="FGFR2b ligand binding and activation"/>
</dbReference>
<dbReference type="Reactome" id="R-DME-5654221">
    <property type="pathway name" value="Phospholipase C-mediated cascade, FGFR2"/>
</dbReference>
<dbReference type="Reactome" id="R-DME-5654227">
    <property type="pathway name" value="Phospholipase C-mediated cascade, FGFR3"/>
</dbReference>
<dbReference type="Reactome" id="R-DME-5654228">
    <property type="pathway name" value="Phospholipase C-mediated cascade, FGFR4"/>
</dbReference>
<dbReference type="Reactome" id="R-DME-5654695">
    <property type="pathway name" value="PI-3K cascade:FGFR2"/>
</dbReference>
<dbReference type="Reactome" id="R-DME-5654699">
    <property type="pathway name" value="SHC-mediated cascade:FGFR2"/>
</dbReference>
<dbReference type="Reactome" id="R-DME-5654700">
    <property type="pathway name" value="FRS-mediated FGFR2 signaling"/>
</dbReference>
<dbReference type="Reactome" id="R-DME-5654704">
    <property type="pathway name" value="SHC-mediated cascade:FGFR3"/>
</dbReference>
<dbReference type="Reactome" id="R-DME-5654706">
    <property type="pathway name" value="FRS-mediated FGFR3 signaling"/>
</dbReference>
<dbReference type="Reactome" id="R-DME-5654710">
    <property type="pathway name" value="PI-3K cascade:FGFR3"/>
</dbReference>
<dbReference type="Reactome" id="R-DME-5654712">
    <property type="pathway name" value="FRS-mediated FGFR4 signaling"/>
</dbReference>
<dbReference type="Reactome" id="R-DME-5654719">
    <property type="pathway name" value="SHC-mediated cascade:FGFR4"/>
</dbReference>
<dbReference type="Reactome" id="R-DME-5654720">
    <property type="pathway name" value="PI-3K cascade:FGFR4"/>
</dbReference>
<dbReference type="Reactome" id="R-DME-5654727">
    <property type="pathway name" value="Negative regulation of FGFR2 signaling"/>
</dbReference>
<dbReference type="Reactome" id="R-DME-5654732">
    <property type="pathway name" value="Negative regulation of FGFR3 signaling"/>
</dbReference>
<dbReference type="Reactome" id="R-DME-5654733">
    <property type="pathway name" value="Negative regulation of FGFR4 signaling"/>
</dbReference>
<dbReference type="Reactome" id="R-DME-5673001">
    <property type="pathway name" value="RAF/MAP kinase cascade"/>
</dbReference>
<dbReference type="Reactome" id="R-DME-6811558">
    <property type="pathway name" value="PI5P, PP2A and IER3 Regulate PI3K/AKT Signaling"/>
</dbReference>
<dbReference type="BioGRID-ORCS" id="42160">
    <property type="hits" value="0 hits in 3 CRISPR screens"/>
</dbReference>
<dbReference type="GenomeRNAi" id="42160"/>
<dbReference type="PRO" id="PR:Q07407"/>
<dbReference type="Proteomes" id="UP000000803">
    <property type="component" value="Chromosome 3R"/>
</dbReference>
<dbReference type="Bgee" id="FBgn0010389">
    <property type="expression patterns" value="Expressed in ovarian sheath cell (Drosophila) in ovary and 81 other cell types or tissues"/>
</dbReference>
<dbReference type="GO" id="GO:0005886">
    <property type="term" value="C:plasma membrane"/>
    <property type="evidence" value="ECO:0000314"/>
    <property type="project" value="FlyBase"/>
</dbReference>
<dbReference type="GO" id="GO:0098975">
    <property type="term" value="C:postsynapse of neuromuscular junction"/>
    <property type="evidence" value="ECO:0000315"/>
    <property type="project" value="FlyBase"/>
</dbReference>
<dbReference type="GO" id="GO:0043235">
    <property type="term" value="C:receptor complex"/>
    <property type="evidence" value="ECO:0000318"/>
    <property type="project" value="GO_Central"/>
</dbReference>
<dbReference type="GO" id="GO:0005524">
    <property type="term" value="F:ATP binding"/>
    <property type="evidence" value="ECO:0007669"/>
    <property type="project" value="UniProtKB-KW"/>
</dbReference>
<dbReference type="GO" id="GO:0005007">
    <property type="term" value="F:fibroblast growth factor receptor activity"/>
    <property type="evidence" value="ECO:0000304"/>
    <property type="project" value="FlyBase"/>
</dbReference>
<dbReference type="GO" id="GO:0004713">
    <property type="term" value="F:protein tyrosine kinase activity"/>
    <property type="evidence" value="ECO:0000250"/>
    <property type="project" value="UniProtKB"/>
</dbReference>
<dbReference type="GO" id="GO:0004714">
    <property type="term" value="F:transmembrane receptor protein tyrosine kinase activity"/>
    <property type="evidence" value="ECO:0000314"/>
    <property type="project" value="FlyBase"/>
</dbReference>
<dbReference type="GO" id="GO:0010002">
    <property type="term" value="P:cardioblast differentiation"/>
    <property type="evidence" value="ECO:0000315"/>
    <property type="project" value="FlyBase"/>
</dbReference>
<dbReference type="GO" id="GO:0007417">
    <property type="term" value="P:central nervous system development"/>
    <property type="evidence" value="ECO:0000315"/>
    <property type="project" value="FlyBase"/>
</dbReference>
<dbReference type="GO" id="GO:0050829">
    <property type="term" value="P:defense response to Gram-negative bacterium"/>
    <property type="evidence" value="ECO:0007001"/>
    <property type="project" value="FlyBase"/>
</dbReference>
<dbReference type="GO" id="GO:0007493">
    <property type="term" value="P:endodermal cell fate determination"/>
    <property type="evidence" value="ECO:0000270"/>
    <property type="project" value="UniProtKB"/>
</dbReference>
<dbReference type="GO" id="GO:0008543">
    <property type="term" value="P:fibroblast growth factor receptor signaling pathway"/>
    <property type="evidence" value="ECO:0000314"/>
    <property type="project" value="FlyBase"/>
</dbReference>
<dbReference type="GO" id="GO:0008354">
    <property type="term" value="P:germ cell migration"/>
    <property type="evidence" value="ECO:0000315"/>
    <property type="project" value="FlyBase"/>
</dbReference>
<dbReference type="GO" id="GO:0021782">
    <property type="term" value="P:glial cell development"/>
    <property type="evidence" value="ECO:0000315"/>
    <property type="project" value="FlyBase"/>
</dbReference>
<dbReference type="GO" id="GO:0010001">
    <property type="term" value="P:glial cell differentiation"/>
    <property type="evidence" value="ECO:0000315"/>
    <property type="project" value="FlyBase"/>
</dbReference>
<dbReference type="GO" id="GO:0042065">
    <property type="term" value="P:glial cell growth"/>
    <property type="evidence" value="ECO:0000315"/>
    <property type="project" value="FlyBase"/>
</dbReference>
<dbReference type="GO" id="GO:0008347">
    <property type="term" value="P:glial cell migration"/>
    <property type="evidence" value="ECO:0000315"/>
    <property type="project" value="FlyBase"/>
</dbReference>
<dbReference type="GO" id="GO:0106091">
    <property type="term" value="P:glial cell projection elongation"/>
    <property type="evidence" value="ECO:0000315"/>
    <property type="project" value="FlyBase"/>
</dbReference>
<dbReference type="GO" id="GO:0007506">
    <property type="term" value="P:gonadal mesoderm development"/>
    <property type="evidence" value="ECO:0000315"/>
    <property type="project" value="FlyBase"/>
</dbReference>
<dbReference type="GO" id="GO:0007507">
    <property type="term" value="P:heart development"/>
    <property type="evidence" value="ECO:0000315"/>
    <property type="project" value="FlyBase"/>
</dbReference>
<dbReference type="GO" id="GO:0007523">
    <property type="term" value="P:larval visceral muscle development"/>
    <property type="evidence" value="ECO:0000315"/>
    <property type="project" value="FlyBase"/>
</dbReference>
<dbReference type="GO" id="GO:0035170">
    <property type="term" value="P:lymph gland crystal cell differentiation"/>
    <property type="evidence" value="ECO:0000315"/>
    <property type="project" value="FlyBase"/>
</dbReference>
<dbReference type="GO" id="GO:0048542">
    <property type="term" value="P:lymph gland development"/>
    <property type="evidence" value="ECO:0000315"/>
    <property type="project" value="FlyBase"/>
</dbReference>
<dbReference type="GO" id="GO:0035169">
    <property type="term" value="P:lymph gland plasmatocyte differentiation"/>
    <property type="evidence" value="ECO:0000315"/>
    <property type="project" value="FlyBase"/>
</dbReference>
<dbReference type="GO" id="GO:0007509">
    <property type="term" value="P:mesoderm migration involved in gastrulation"/>
    <property type="evidence" value="ECO:0000315"/>
    <property type="project" value="FlyBase"/>
</dbReference>
<dbReference type="GO" id="GO:0001710">
    <property type="term" value="P:mesodermal cell fate commitment"/>
    <property type="evidence" value="ECO:0000315"/>
    <property type="project" value="FlyBase"/>
</dbReference>
<dbReference type="GO" id="GO:0007500">
    <property type="term" value="P:mesodermal cell fate determination"/>
    <property type="evidence" value="ECO:0000270"/>
    <property type="project" value="UniProtKB"/>
</dbReference>
<dbReference type="GO" id="GO:0008078">
    <property type="term" value="P:mesodermal cell migration"/>
    <property type="evidence" value="ECO:0000315"/>
    <property type="project" value="FlyBase"/>
</dbReference>
<dbReference type="GO" id="GO:0055001">
    <property type="term" value="P:muscle cell development"/>
    <property type="evidence" value="ECO:0000315"/>
    <property type="project" value="FlyBase"/>
</dbReference>
<dbReference type="GO" id="GO:0048626">
    <property type="term" value="P:myoblast fate specification"/>
    <property type="evidence" value="ECO:0000315"/>
    <property type="project" value="FlyBase"/>
</dbReference>
<dbReference type="GO" id="GO:0110122">
    <property type="term" value="P:myotube cell migration"/>
    <property type="evidence" value="ECO:0000315"/>
    <property type="project" value="FlyBase"/>
</dbReference>
<dbReference type="GO" id="GO:0061320">
    <property type="term" value="P:pericardial nephrocyte differentiation"/>
    <property type="evidence" value="ECO:0000315"/>
    <property type="project" value="FlyBase"/>
</dbReference>
<dbReference type="GO" id="GO:0008284">
    <property type="term" value="P:positive regulation of cell population proliferation"/>
    <property type="evidence" value="ECO:0000318"/>
    <property type="project" value="GO_Central"/>
</dbReference>
<dbReference type="GO" id="GO:1903977">
    <property type="term" value="P:positive regulation of glial cell migration"/>
    <property type="evidence" value="ECO:0000315"/>
    <property type="project" value="FlyBase"/>
</dbReference>
<dbReference type="GO" id="GO:0045089">
    <property type="term" value="P:positive regulation of innate immune response"/>
    <property type="evidence" value="ECO:0007001"/>
    <property type="project" value="FlyBase"/>
</dbReference>
<dbReference type="GO" id="GO:0043410">
    <property type="term" value="P:positive regulation of MAPK cascade"/>
    <property type="evidence" value="ECO:0000318"/>
    <property type="project" value="GO_Central"/>
</dbReference>
<dbReference type="GO" id="GO:0045887">
    <property type="term" value="P:positive regulation of synaptic assembly at neuromuscular junction"/>
    <property type="evidence" value="ECO:0000316"/>
    <property type="project" value="FlyBase"/>
</dbReference>
<dbReference type="GO" id="GO:0008360">
    <property type="term" value="P:regulation of cell shape"/>
    <property type="evidence" value="ECO:0000315"/>
    <property type="project" value="FlyBase"/>
</dbReference>
<dbReference type="GO" id="GO:0007431">
    <property type="term" value="P:salivary gland development"/>
    <property type="evidence" value="ECO:0000304"/>
    <property type="project" value="FlyBase"/>
</dbReference>
<dbReference type="GO" id="GO:0007525">
    <property type="term" value="P:somatic muscle development"/>
    <property type="evidence" value="ECO:0000315"/>
    <property type="project" value="FlyBase"/>
</dbReference>
<dbReference type="GO" id="GO:0007419">
    <property type="term" value="P:ventral cord development"/>
    <property type="evidence" value="ECO:0000315"/>
    <property type="project" value="FlyBase"/>
</dbReference>
<dbReference type="GO" id="GO:0007522">
    <property type="term" value="P:visceral muscle development"/>
    <property type="evidence" value="ECO:0000315"/>
    <property type="project" value="FlyBase"/>
</dbReference>
<dbReference type="FunFam" id="2.60.40.10:FF:000016">
    <property type="entry name" value="Fibroblast growth factor receptor"/>
    <property type="match status" value="1"/>
</dbReference>
<dbReference type="FunFam" id="3.30.200.20:FF:000651">
    <property type="entry name" value="Fibroblast growth factor receptor"/>
    <property type="match status" value="1"/>
</dbReference>
<dbReference type="FunFam" id="1.10.510.10:FF:000426">
    <property type="entry name" value="Receptor-type tyrosine-protein kinase FLT3"/>
    <property type="match status" value="1"/>
</dbReference>
<dbReference type="Gene3D" id="2.60.40.10">
    <property type="entry name" value="Immunoglobulins"/>
    <property type="match status" value="2"/>
</dbReference>
<dbReference type="Gene3D" id="3.30.200.20">
    <property type="entry name" value="Phosphorylase Kinase, domain 1"/>
    <property type="match status" value="1"/>
</dbReference>
<dbReference type="Gene3D" id="1.10.510.10">
    <property type="entry name" value="Transferase(Phosphotransferase) domain 1"/>
    <property type="match status" value="1"/>
</dbReference>
<dbReference type="InterPro" id="IPR016248">
    <property type="entry name" value="FGF_rcpt_fam"/>
</dbReference>
<dbReference type="InterPro" id="IPR007110">
    <property type="entry name" value="Ig-like_dom"/>
</dbReference>
<dbReference type="InterPro" id="IPR036179">
    <property type="entry name" value="Ig-like_dom_sf"/>
</dbReference>
<dbReference type="InterPro" id="IPR013783">
    <property type="entry name" value="Ig-like_fold"/>
</dbReference>
<dbReference type="InterPro" id="IPR003599">
    <property type="entry name" value="Ig_sub"/>
</dbReference>
<dbReference type="InterPro" id="IPR003598">
    <property type="entry name" value="Ig_sub2"/>
</dbReference>
<dbReference type="InterPro" id="IPR011009">
    <property type="entry name" value="Kinase-like_dom_sf"/>
</dbReference>
<dbReference type="InterPro" id="IPR000719">
    <property type="entry name" value="Prot_kinase_dom"/>
</dbReference>
<dbReference type="InterPro" id="IPR017441">
    <property type="entry name" value="Protein_kinase_ATP_BS"/>
</dbReference>
<dbReference type="InterPro" id="IPR050122">
    <property type="entry name" value="RTK"/>
</dbReference>
<dbReference type="InterPro" id="IPR001245">
    <property type="entry name" value="Ser-Thr/Tyr_kinase_cat_dom"/>
</dbReference>
<dbReference type="InterPro" id="IPR008266">
    <property type="entry name" value="Tyr_kinase_AS"/>
</dbReference>
<dbReference type="InterPro" id="IPR020635">
    <property type="entry name" value="Tyr_kinase_cat_dom"/>
</dbReference>
<dbReference type="PANTHER" id="PTHR24416:SF550">
    <property type="entry name" value="FIBROBLAST GROWTH FACTOR RECEPTOR HOMOLOG 1-RELATED"/>
    <property type="match status" value="1"/>
</dbReference>
<dbReference type="PANTHER" id="PTHR24416">
    <property type="entry name" value="TYROSINE-PROTEIN KINASE RECEPTOR"/>
    <property type="match status" value="1"/>
</dbReference>
<dbReference type="Pfam" id="PF13927">
    <property type="entry name" value="Ig_3"/>
    <property type="match status" value="1"/>
</dbReference>
<dbReference type="Pfam" id="PF07714">
    <property type="entry name" value="PK_Tyr_Ser-Thr"/>
    <property type="match status" value="1"/>
</dbReference>
<dbReference type="PIRSF" id="PIRSF000628">
    <property type="entry name" value="FGFR"/>
    <property type="match status" value="1"/>
</dbReference>
<dbReference type="PRINTS" id="PR00109">
    <property type="entry name" value="TYRKINASE"/>
</dbReference>
<dbReference type="SMART" id="SM00409">
    <property type="entry name" value="IG"/>
    <property type="match status" value="2"/>
</dbReference>
<dbReference type="SMART" id="SM00408">
    <property type="entry name" value="IGc2"/>
    <property type="match status" value="1"/>
</dbReference>
<dbReference type="SMART" id="SM00219">
    <property type="entry name" value="TyrKc"/>
    <property type="match status" value="1"/>
</dbReference>
<dbReference type="SUPFAM" id="SSF48726">
    <property type="entry name" value="Immunoglobulin"/>
    <property type="match status" value="2"/>
</dbReference>
<dbReference type="SUPFAM" id="SSF56112">
    <property type="entry name" value="Protein kinase-like (PK-like)"/>
    <property type="match status" value="1"/>
</dbReference>
<dbReference type="PROSITE" id="PS50835">
    <property type="entry name" value="IG_LIKE"/>
    <property type="match status" value="1"/>
</dbReference>
<dbReference type="PROSITE" id="PS00107">
    <property type="entry name" value="PROTEIN_KINASE_ATP"/>
    <property type="match status" value="1"/>
</dbReference>
<dbReference type="PROSITE" id="PS50011">
    <property type="entry name" value="PROTEIN_KINASE_DOM"/>
    <property type="match status" value="1"/>
</dbReference>
<dbReference type="PROSITE" id="PS00109">
    <property type="entry name" value="PROTEIN_KINASE_TYR"/>
    <property type="match status" value="1"/>
</dbReference>
<accession>Q07407</accession>
<accession>A4V320</accession>
<accession>O18371</accession>
<accession>Q26294</accession>
<accession>Q9VED5</accession>
<gene>
    <name type="primary">htl</name>
    <name type="synonym">FR1</name>
    <name type="synonym">Tk1</name>
    <name type="ORF">CG7223</name>
</gene>